<dbReference type="EC" id="6.1.1.6" evidence="1"/>
<dbReference type="EMBL" id="CP000712">
    <property type="protein sequence ID" value="ABQ80350.1"/>
    <property type="molecule type" value="Genomic_DNA"/>
</dbReference>
<dbReference type="SMR" id="A5W890"/>
<dbReference type="KEGG" id="ppf:Pput_4226"/>
<dbReference type="eggNOG" id="COG1190">
    <property type="taxonomic scope" value="Bacteria"/>
</dbReference>
<dbReference type="HOGENOM" id="CLU_008255_6_0_6"/>
<dbReference type="GO" id="GO:0005829">
    <property type="term" value="C:cytosol"/>
    <property type="evidence" value="ECO:0007669"/>
    <property type="project" value="TreeGrafter"/>
</dbReference>
<dbReference type="GO" id="GO:0005524">
    <property type="term" value="F:ATP binding"/>
    <property type="evidence" value="ECO:0007669"/>
    <property type="project" value="UniProtKB-UniRule"/>
</dbReference>
<dbReference type="GO" id="GO:0004824">
    <property type="term" value="F:lysine-tRNA ligase activity"/>
    <property type="evidence" value="ECO:0007669"/>
    <property type="project" value="UniProtKB-UniRule"/>
</dbReference>
<dbReference type="GO" id="GO:0000287">
    <property type="term" value="F:magnesium ion binding"/>
    <property type="evidence" value="ECO:0007669"/>
    <property type="project" value="UniProtKB-UniRule"/>
</dbReference>
<dbReference type="GO" id="GO:0000049">
    <property type="term" value="F:tRNA binding"/>
    <property type="evidence" value="ECO:0007669"/>
    <property type="project" value="TreeGrafter"/>
</dbReference>
<dbReference type="GO" id="GO:0006430">
    <property type="term" value="P:lysyl-tRNA aminoacylation"/>
    <property type="evidence" value="ECO:0007669"/>
    <property type="project" value="UniProtKB-UniRule"/>
</dbReference>
<dbReference type="CDD" id="cd00775">
    <property type="entry name" value="LysRS_core"/>
    <property type="match status" value="1"/>
</dbReference>
<dbReference type="CDD" id="cd04322">
    <property type="entry name" value="LysRS_N"/>
    <property type="match status" value="1"/>
</dbReference>
<dbReference type="FunFam" id="2.40.50.140:FF:000024">
    <property type="entry name" value="Lysine--tRNA ligase"/>
    <property type="match status" value="1"/>
</dbReference>
<dbReference type="FunFam" id="3.30.930.10:FF:000001">
    <property type="entry name" value="Lysine--tRNA ligase"/>
    <property type="match status" value="1"/>
</dbReference>
<dbReference type="Gene3D" id="3.30.930.10">
    <property type="entry name" value="Bira Bifunctional Protein, Domain 2"/>
    <property type="match status" value="1"/>
</dbReference>
<dbReference type="Gene3D" id="2.40.50.140">
    <property type="entry name" value="Nucleic acid-binding proteins"/>
    <property type="match status" value="1"/>
</dbReference>
<dbReference type="HAMAP" id="MF_00252">
    <property type="entry name" value="Lys_tRNA_synth_class2"/>
    <property type="match status" value="1"/>
</dbReference>
<dbReference type="InterPro" id="IPR004364">
    <property type="entry name" value="Aa-tRNA-synt_II"/>
</dbReference>
<dbReference type="InterPro" id="IPR006195">
    <property type="entry name" value="aa-tRNA-synth_II"/>
</dbReference>
<dbReference type="InterPro" id="IPR045864">
    <property type="entry name" value="aa-tRNA-synth_II/BPL/LPL"/>
</dbReference>
<dbReference type="InterPro" id="IPR002313">
    <property type="entry name" value="Lys-tRNA-ligase_II"/>
</dbReference>
<dbReference type="InterPro" id="IPR044136">
    <property type="entry name" value="Lys-tRNA-ligase_II_N"/>
</dbReference>
<dbReference type="InterPro" id="IPR018149">
    <property type="entry name" value="Lys-tRNA-synth_II_C"/>
</dbReference>
<dbReference type="InterPro" id="IPR012340">
    <property type="entry name" value="NA-bd_OB-fold"/>
</dbReference>
<dbReference type="InterPro" id="IPR004365">
    <property type="entry name" value="NA-bd_OB_tRNA"/>
</dbReference>
<dbReference type="NCBIfam" id="TIGR00499">
    <property type="entry name" value="lysS_bact"/>
    <property type="match status" value="1"/>
</dbReference>
<dbReference type="NCBIfam" id="NF001756">
    <property type="entry name" value="PRK00484.1"/>
    <property type="match status" value="1"/>
</dbReference>
<dbReference type="PANTHER" id="PTHR42918:SF15">
    <property type="entry name" value="LYSINE--TRNA LIGASE, CHLOROPLASTIC_MITOCHONDRIAL"/>
    <property type="match status" value="1"/>
</dbReference>
<dbReference type="PANTHER" id="PTHR42918">
    <property type="entry name" value="LYSYL-TRNA SYNTHETASE"/>
    <property type="match status" value="1"/>
</dbReference>
<dbReference type="Pfam" id="PF00152">
    <property type="entry name" value="tRNA-synt_2"/>
    <property type="match status" value="1"/>
</dbReference>
<dbReference type="Pfam" id="PF01336">
    <property type="entry name" value="tRNA_anti-codon"/>
    <property type="match status" value="1"/>
</dbReference>
<dbReference type="PRINTS" id="PR00982">
    <property type="entry name" value="TRNASYNTHLYS"/>
</dbReference>
<dbReference type="SUPFAM" id="SSF55681">
    <property type="entry name" value="Class II aaRS and biotin synthetases"/>
    <property type="match status" value="1"/>
</dbReference>
<dbReference type="SUPFAM" id="SSF50249">
    <property type="entry name" value="Nucleic acid-binding proteins"/>
    <property type="match status" value="1"/>
</dbReference>
<dbReference type="PROSITE" id="PS50862">
    <property type="entry name" value="AA_TRNA_LIGASE_II"/>
    <property type="match status" value="1"/>
</dbReference>
<name>SYK_PSEP1</name>
<evidence type="ECO:0000255" key="1">
    <source>
        <dbReference type="HAMAP-Rule" id="MF_00252"/>
    </source>
</evidence>
<feature type="chain" id="PRO_1000012912" description="Lysine--tRNA ligase">
    <location>
        <begin position="1"/>
        <end position="500"/>
    </location>
</feature>
<feature type="binding site" evidence="1">
    <location>
        <position position="410"/>
    </location>
    <ligand>
        <name>Mg(2+)</name>
        <dbReference type="ChEBI" id="CHEBI:18420"/>
        <label>1</label>
    </ligand>
</feature>
<feature type="binding site" evidence="1">
    <location>
        <position position="417"/>
    </location>
    <ligand>
        <name>Mg(2+)</name>
        <dbReference type="ChEBI" id="CHEBI:18420"/>
        <label>1</label>
    </ligand>
</feature>
<feature type="binding site" evidence="1">
    <location>
        <position position="417"/>
    </location>
    <ligand>
        <name>Mg(2+)</name>
        <dbReference type="ChEBI" id="CHEBI:18420"/>
        <label>2</label>
    </ligand>
</feature>
<proteinExistence type="inferred from homology"/>
<organism>
    <name type="scientific">Pseudomonas putida (strain ATCC 700007 / DSM 6899 / JCM 31910 / BCRC 17059 / LMG 24140 / F1)</name>
    <dbReference type="NCBI Taxonomy" id="351746"/>
    <lineage>
        <taxon>Bacteria</taxon>
        <taxon>Pseudomonadati</taxon>
        <taxon>Pseudomonadota</taxon>
        <taxon>Gammaproteobacteria</taxon>
        <taxon>Pseudomonadales</taxon>
        <taxon>Pseudomonadaceae</taxon>
        <taxon>Pseudomonas</taxon>
    </lineage>
</organism>
<comment type="catalytic activity">
    <reaction evidence="1">
        <text>tRNA(Lys) + L-lysine + ATP = L-lysyl-tRNA(Lys) + AMP + diphosphate</text>
        <dbReference type="Rhea" id="RHEA:20792"/>
        <dbReference type="Rhea" id="RHEA-COMP:9696"/>
        <dbReference type="Rhea" id="RHEA-COMP:9697"/>
        <dbReference type="ChEBI" id="CHEBI:30616"/>
        <dbReference type="ChEBI" id="CHEBI:32551"/>
        <dbReference type="ChEBI" id="CHEBI:33019"/>
        <dbReference type="ChEBI" id="CHEBI:78442"/>
        <dbReference type="ChEBI" id="CHEBI:78529"/>
        <dbReference type="ChEBI" id="CHEBI:456215"/>
        <dbReference type="EC" id="6.1.1.6"/>
    </reaction>
</comment>
<comment type="cofactor">
    <cofactor evidence="1">
        <name>Mg(2+)</name>
        <dbReference type="ChEBI" id="CHEBI:18420"/>
    </cofactor>
    <text evidence="1">Binds 3 Mg(2+) ions per subunit.</text>
</comment>
<comment type="subunit">
    <text evidence="1">Homodimer.</text>
</comment>
<comment type="subcellular location">
    <subcellularLocation>
        <location evidence="1">Cytoplasm</location>
    </subcellularLocation>
</comment>
<comment type="similarity">
    <text evidence="1">Belongs to the class-II aminoacyl-tRNA synthetase family.</text>
</comment>
<keyword id="KW-0030">Aminoacyl-tRNA synthetase</keyword>
<keyword id="KW-0067">ATP-binding</keyword>
<keyword id="KW-0963">Cytoplasm</keyword>
<keyword id="KW-0436">Ligase</keyword>
<keyword id="KW-0460">Magnesium</keyword>
<keyword id="KW-0479">Metal-binding</keyword>
<keyword id="KW-0547">Nucleotide-binding</keyword>
<keyword id="KW-0648">Protein biosynthesis</keyword>
<reference key="1">
    <citation type="submission" date="2007-05" db="EMBL/GenBank/DDBJ databases">
        <title>Complete sequence of Pseudomonas putida F1.</title>
        <authorList>
            <consortium name="US DOE Joint Genome Institute"/>
            <person name="Copeland A."/>
            <person name="Lucas S."/>
            <person name="Lapidus A."/>
            <person name="Barry K."/>
            <person name="Detter J.C."/>
            <person name="Glavina del Rio T."/>
            <person name="Hammon N."/>
            <person name="Israni S."/>
            <person name="Dalin E."/>
            <person name="Tice H."/>
            <person name="Pitluck S."/>
            <person name="Chain P."/>
            <person name="Malfatti S."/>
            <person name="Shin M."/>
            <person name="Vergez L."/>
            <person name="Schmutz J."/>
            <person name="Larimer F."/>
            <person name="Land M."/>
            <person name="Hauser L."/>
            <person name="Kyrpides N."/>
            <person name="Lykidis A."/>
            <person name="Parales R."/>
            <person name="Richardson P."/>
        </authorList>
    </citation>
    <scope>NUCLEOTIDE SEQUENCE [LARGE SCALE GENOMIC DNA]</scope>
    <source>
        <strain>ATCC 700007 / DSM 6899 / JCM 31910 / BCRC 17059 / LMG 24140 / F1</strain>
    </source>
</reference>
<gene>
    <name evidence="1" type="primary">lysS</name>
    <name type="ordered locus">Pput_4226</name>
</gene>
<sequence length="500" mass="57110">MSDLKTESQDLQQEENALIALRKEKLAAERAKGNAFPNDFRRDSYCNDLQKQYADKTKEELEAAAIPVKVAGRIMLNRGSFMVIQDMTGRIQVYVNRKTLPEETLAAVKTWDLGDIISAEGTLARSGKGDLYVEMTNVRLLTKSLRPLPDKHHGLTDTEQRYRQRYVDLMVNEETRHTFRVRSQVISHIRKFLIERDFLEVETPMLQTIPGGAAAKPFETHHNALDMAMFLRIAPELYLKRLVVGGFEKVFEINRNFRNEGVSTRHNPEFTMLEFYQAYADYRDNMDLTEELFRELAQLVLGSTDVPYGDKVFHFGEPFVRLSVFDSILKYNPELTAADLQDVDRAREIAKKAGAKVLGHEGLGKLQVMIFEELVEHKLEQPHFITEYPFEVSPLARRNDDNPAVTDRFELFIGGREIANAYSELNDAEDQAERFLAQVAEKDAGDDEAMHYDADFVRALEYGMPPTAGEGIGIDRLVMLLTNSPSIRDVILFPHMRPQA</sequence>
<accession>A5W890</accession>
<protein>
    <recommendedName>
        <fullName evidence="1">Lysine--tRNA ligase</fullName>
        <ecNumber evidence="1">6.1.1.6</ecNumber>
    </recommendedName>
    <alternativeName>
        <fullName evidence="1">Lysyl-tRNA synthetase</fullName>
        <shortName evidence="1">LysRS</shortName>
    </alternativeName>
</protein>